<proteinExistence type="inferred from homology"/>
<name>YCAR_SALPK</name>
<protein>
    <recommendedName>
        <fullName evidence="1">UPF0434 protein YcaR</fullName>
    </recommendedName>
</protein>
<evidence type="ECO:0000255" key="1">
    <source>
        <dbReference type="HAMAP-Rule" id="MF_01187"/>
    </source>
</evidence>
<comment type="similarity">
    <text evidence="1">Belongs to the UPF0434 family.</text>
</comment>
<dbReference type="EMBL" id="FM200053">
    <property type="protein sequence ID" value="CAR59876.1"/>
    <property type="molecule type" value="Genomic_DNA"/>
</dbReference>
<dbReference type="RefSeq" id="WP_000350061.1">
    <property type="nucleotide sequence ID" value="NC_011147.1"/>
</dbReference>
<dbReference type="SMR" id="B5BBP1"/>
<dbReference type="KEGG" id="sek:SSPA1684"/>
<dbReference type="HOGENOM" id="CLU_155659_3_1_6"/>
<dbReference type="Proteomes" id="UP000001869">
    <property type="component" value="Chromosome"/>
</dbReference>
<dbReference type="GO" id="GO:0005829">
    <property type="term" value="C:cytosol"/>
    <property type="evidence" value="ECO:0007669"/>
    <property type="project" value="TreeGrafter"/>
</dbReference>
<dbReference type="FunFam" id="2.20.25.10:FF:000002">
    <property type="entry name" value="UPF0434 protein YcaR"/>
    <property type="match status" value="1"/>
</dbReference>
<dbReference type="Gene3D" id="2.20.25.10">
    <property type="match status" value="1"/>
</dbReference>
<dbReference type="HAMAP" id="MF_01187">
    <property type="entry name" value="UPF0434"/>
    <property type="match status" value="1"/>
</dbReference>
<dbReference type="InterPro" id="IPR005651">
    <property type="entry name" value="Trm112-like"/>
</dbReference>
<dbReference type="NCBIfam" id="NF008806">
    <property type="entry name" value="PRK11827.1"/>
    <property type="match status" value="1"/>
</dbReference>
<dbReference type="PANTHER" id="PTHR33505:SF4">
    <property type="entry name" value="PROTEIN PREY, MITOCHONDRIAL"/>
    <property type="match status" value="1"/>
</dbReference>
<dbReference type="PANTHER" id="PTHR33505">
    <property type="entry name" value="ZGC:162634"/>
    <property type="match status" value="1"/>
</dbReference>
<dbReference type="Pfam" id="PF03966">
    <property type="entry name" value="Trm112p"/>
    <property type="match status" value="1"/>
</dbReference>
<dbReference type="SUPFAM" id="SSF158997">
    <property type="entry name" value="Trm112p-like"/>
    <property type="match status" value="1"/>
</dbReference>
<feature type="chain" id="PRO_1000138333" description="UPF0434 protein YcaR">
    <location>
        <begin position="1"/>
        <end position="60"/>
    </location>
</feature>
<organism>
    <name type="scientific">Salmonella paratyphi A (strain AKU_12601)</name>
    <dbReference type="NCBI Taxonomy" id="554290"/>
    <lineage>
        <taxon>Bacteria</taxon>
        <taxon>Pseudomonadati</taxon>
        <taxon>Pseudomonadota</taxon>
        <taxon>Gammaproteobacteria</taxon>
        <taxon>Enterobacterales</taxon>
        <taxon>Enterobacteriaceae</taxon>
        <taxon>Salmonella</taxon>
    </lineage>
</organism>
<gene>
    <name evidence="1" type="primary">ycaR</name>
    <name type="ordered locus">SSPA1684</name>
</gene>
<sequence>MDHRLLEIIACPVCNGKLWYNQEQQELICKLDNLAFPLRDGIPVLLENEARALTSDESKS</sequence>
<reference key="1">
    <citation type="journal article" date="2009" name="BMC Genomics">
        <title>Pseudogene accumulation in the evolutionary histories of Salmonella enterica serovars Paratyphi A and Typhi.</title>
        <authorList>
            <person name="Holt K.E."/>
            <person name="Thomson N.R."/>
            <person name="Wain J."/>
            <person name="Langridge G.C."/>
            <person name="Hasan R."/>
            <person name="Bhutta Z.A."/>
            <person name="Quail M.A."/>
            <person name="Norbertczak H."/>
            <person name="Walker D."/>
            <person name="Simmonds M."/>
            <person name="White B."/>
            <person name="Bason N."/>
            <person name="Mungall K."/>
            <person name="Dougan G."/>
            <person name="Parkhill J."/>
        </authorList>
    </citation>
    <scope>NUCLEOTIDE SEQUENCE [LARGE SCALE GENOMIC DNA]</scope>
    <source>
        <strain>AKU_12601</strain>
    </source>
</reference>
<accession>B5BBP1</accession>